<comment type="function">
    <text evidence="1">Produces ATP from ADP in the presence of a proton gradient across the membrane. The catalytic sites are hosted primarily by the beta subunits.</text>
</comment>
<comment type="catalytic activity">
    <reaction evidence="1">
        <text>ATP + H2O + 4 H(+)(in) = ADP + phosphate + 5 H(+)(out)</text>
        <dbReference type="Rhea" id="RHEA:57720"/>
        <dbReference type="ChEBI" id="CHEBI:15377"/>
        <dbReference type="ChEBI" id="CHEBI:15378"/>
        <dbReference type="ChEBI" id="CHEBI:30616"/>
        <dbReference type="ChEBI" id="CHEBI:43474"/>
        <dbReference type="ChEBI" id="CHEBI:456216"/>
        <dbReference type="EC" id="7.1.2.2"/>
    </reaction>
</comment>
<comment type="subunit">
    <text evidence="1">F-type ATPases have 2 components, CF(1) - the catalytic core - and CF(0) - the membrane proton channel. CF(1) has five subunits: alpha(3), beta(3), gamma(1), delta(1), epsilon(1). CF(0) has three main subunits: a(1), b(2) and c(9-12). The alpha and beta chains form an alternating ring which encloses part of the gamma chain. CF(1) is attached to CF(0) by a central stalk formed by the gamma and epsilon chains, while a peripheral stalk is formed by the delta and b chains.</text>
</comment>
<comment type="subcellular location">
    <subcellularLocation>
        <location evidence="1">Cell inner membrane</location>
        <topology evidence="1">Peripheral membrane protein</topology>
    </subcellularLocation>
</comment>
<comment type="similarity">
    <text evidence="1">Belongs to the ATPase alpha/beta chains family.</text>
</comment>
<organism>
    <name type="scientific">Photobacterium profundum (strain SS9)</name>
    <dbReference type="NCBI Taxonomy" id="298386"/>
    <lineage>
        <taxon>Bacteria</taxon>
        <taxon>Pseudomonadati</taxon>
        <taxon>Pseudomonadota</taxon>
        <taxon>Gammaproteobacteria</taxon>
        <taxon>Vibrionales</taxon>
        <taxon>Vibrionaceae</taxon>
        <taxon>Photobacterium</taxon>
    </lineage>
</organism>
<sequence>MATGKIVQIIGAVVDVEFPQDSVPKVYDALKVDAKEKGTLVLEVQQQLGGGVVRCIAMGTSDGLRRGLSVENTDRPIEVPVGIATLGRIMNVLGEPIDECGEIGEEQRYAIHREAPSYEEQSNETSLLETGVKVIDLICPFAKGGKIGLFGGAGVGKTVNMMELINNIALQHSGLSVFAGVGERTREGNDFYFEMQEAGVVNLENPSESKVAMVYGQMNEPPGNRLRVALTGLTMAERFRDEGRDVLLFIDNIYRYTLAGTEVSALLGRMPSAVGYQPTLAEEMGVLQERITSTKSGSITSVQAVYVPADDLTDPSPATTFAHLDATVVLSRQIASLGLYPAIDPLDSTSRMLDPLVVGQEHYDIARGVQSLLQRYKELKDIIAILGMDELSENDKQAVSRARKIERFLTQPYHVAEVFTGDPGIYVALKDTLRSFKGLLAGEYDDIPEQAFMYCGAIEDVLEKAKKL</sequence>
<gene>
    <name evidence="1" type="primary">atpD1</name>
    <name type="ordered locus">PBPRA3604</name>
</gene>
<keyword id="KW-0066">ATP synthesis</keyword>
<keyword id="KW-0067">ATP-binding</keyword>
<keyword id="KW-0997">Cell inner membrane</keyword>
<keyword id="KW-1003">Cell membrane</keyword>
<keyword id="KW-0139">CF(1)</keyword>
<keyword id="KW-0375">Hydrogen ion transport</keyword>
<keyword id="KW-0406">Ion transport</keyword>
<keyword id="KW-0472">Membrane</keyword>
<keyword id="KW-0547">Nucleotide-binding</keyword>
<keyword id="KW-1185">Reference proteome</keyword>
<keyword id="KW-1278">Translocase</keyword>
<keyword id="KW-0813">Transport</keyword>
<proteinExistence type="inferred from homology"/>
<protein>
    <recommendedName>
        <fullName evidence="1">ATP synthase subunit beta 1</fullName>
        <ecNumber evidence="1">7.1.2.2</ecNumber>
    </recommendedName>
    <alternativeName>
        <fullName evidence="1">ATP synthase F1 sector subunit beta 1</fullName>
    </alternativeName>
    <alternativeName>
        <fullName evidence="1">F-ATPase subunit beta 1</fullName>
    </alternativeName>
</protein>
<reference key="1">
    <citation type="journal article" date="2005" name="Science">
        <title>Life at depth: Photobacterium profundum genome sequence and expression analysis.</title>
        <authorList>
            <person name="Vezzi A."/>
            <person name="Campanaro S."/>
            <person name="D'Angelo M."/>
            <person name="Simonato F."/>
            <person name="Vitulo N."/>
            <person name="Lauro F.M."/>
            <person name="Cestaro A."/>
            <person name="Malacrida G."/>
            <person name="Simionati B."/>
            <person name="Cannata N."/>
            <person name="Romualdi C."/>
            <person name="Bartlett D.H."/>
            <person name="Valle G."/>
        </authorList>
    </citation>
    <scope>NUCLEOTIDE SEQUENCE [LARGE SCALE GENOMIC DNA]</scope>
    <source>
        <strain>ATCC BAA-1253 / SS9</strain>
    </source>
</reference>
<accession>Q6LLG8</accession>
<evidence type="ECO:0000255" key="1">
    <source>
        <dbReference type="HAMAP-Rule" id="MF_01347"/>
    </source>
</evidence>
<feature type="chain" id="PRO_0000254328" description="ATP synthase subunit beta 1">
    <location>
        <begin position="1"/>
        <end position="468"/>
    </location>
</feature>
<feature type="binding site" evidence="1">
    <location>
        <begin position="151"/>
        <end position="158"/>
    </location>
    <ligand>
        <name>ATP</name>
        <dbReference type="ChEBI" id="CHEBI:30616"/>
    </ligand>
</feature>
<name>ATPB1_PHOPR</name>
<dbReference type="EC" id="7.1.2.2" evidence="1"/>
<dbReference type="EMBL" id="CR378674">
    <property type="protein sequence ID" value="CAG21860.1"/>
    <property type="molecule type" value="Genomic_DNA"/>
</dbReference>
<dbReference type="SMR" id="Q6LLG8"/>
<dbReference type="STRING" id="298386.PBPRA3604"/>
<dbReference type="KEGG" id="ppr:PBPRA3604"/>
<dbReference type="eggNOG" id="COG0055">
    <property type="taxonomic scope" value="Bacteria"/>
</dbReference>
<dbReference type="HOGENOM" id="CLU_022398_0_2_6"/>
<dbReference type="Proteomes" id="UP000000593">
    <property type="component" value="Chromosome 1"/>
</dbReference>
<dbReference type="GO" id="GO:0005886">
    <property type="term" value="C:plasma membrane"/>
    <property type="evidence" value="ECO:0007669"/>
    <property type="project" value="UniProtKB-SubCell"/>
</dbReference>
<dbReference type="GO" id="GO:0045259">
    <property type="term" value="C:proton-transporting ATP synthase complex"/>
    <property type="evidence" value="ECO:0007669"/>
    <property type="project" value="UniProtKB-KW"/>
</dbReference>
<dbReference type="GO" id="GO:0005524">
    <property type="term" value="F:ATP binding"/>
    <property type="evidence" value="ECO:0007669"/>
    <property type="project" value="UniProtKB-UniRule"/>
</dbReference>
<dbReference type="GO" id="GO:0016887">
    <property type="term" value="F:ATP hydrolysis activity"/>
    <property type="evidence" value="ECO:0007669"/>
    <property type="project" value="InterPro"/>
</dbReference>
<dbReference type="GO" id="GO:0046933">
    <property type="term" value="F:proton-transporting ATP synthase activity, rotational mechanism"/>
    <property type="evidence" value="ECO:0007669"/>
    <property type="project" value="UniProtKB-UniRule"/>
</dbReference>
<dbReference type="CDD" id="cd18110">
    <property type="entry name" value="ATP-synt_F1_beta_C"/>
    <property type="match status" value="1"/>
</dbReference>
<dbReference type="CDD" id="cd18115">
    <property type="entry name" value="ATP-synt_F1_beta_N"/>
    <property type="match status" value="1"/>
</dbReference>
<dbReference type="CDD" id="cd01133">
    <property type="entry name" value="F1-ATPase_beta_CD"/>
    <property type="match status" value="1"/>
</dbReference>
<dbReference type="FunFam" id="1.10.1140.10:FF:000001">
    <property type="entry name" value="ATP synthase subunit beta"/>
    <property type="match status" value="1"/>
</dbReference>
<dbReference type="FunFam" id="2.40.10.170:FF:000003">
    <property type="entry name" value="ATP synthase subunit beta"/>
    <property type="match status" value="1"/>
</dbReference>
<dbReference type="FunFam" id="3.40.50.300:FF:000004">
    <property type="entry name" value="ATP synthase subunit beta"/>
    <property type="match status" value="1"/>
</dbReference>
<dbReference type="Gene3D" id="2.40.10.170">
    <property type="match status" value="1"/>
</dbReference>
<dbReference type="Gene3D" id="1.10.1140.10">
    <property type="entry name" value="Bovine Mitochondrial F1-atpase, Atp Synthase Beta Chain, Chain D, domain 3"/>
    <property type="match status" value="1"/>
</dbReference>
<dbReference type="Gene3D" id="3.40.50.300">
    <property type="entry name" value="P-loop containing nucleotide triphosphate hydrolases"/>
    <property type="match status" value="1"/>
</dbReference>
<dbReference type="HAMAP" id="MF_01347">
    <property type="entry name" value="ATP_synth_beta_bact"/>
    <property type="match status" value="1"/>
</dbReference>
<dbReference type="InterPro" id="IPR003593">
    <property type="entry name" value="AAA+_ATPase"/>
</dbReference>
<dbReference type="InterPro" id="IPR055190">
    <property type="entry name" value="ATP-synt_VA_C"/>
</dbReference>
<dbReference type="InterPro" id="IPR005722">
    <property type="entry name" value="ATP_synth_F1_bsu"/>
</dbReference>
<dbReference type="InterPro" id="IPR020003">
    <property type="entry name" value="ATPase_a/bsu_AS"/>
</dbReference>
<dbReference type="InterPro" id="IPR050053">
    <property type="entry name" value="ATPase_alpha/beta_chains"/>
</dbReference>
<dbReference type="InterPro" id="IPR004100">
    <property type="entry name" value="ATPase_F1/V1/A1_a/bsu_N"/>
</dbReference>
<dbReference type="InterPro" id="IPR036121">
    <property type="entry name" value="ATPase_F1/V1/A1_a/bsu_N_sf"/>
</dbReference>
<dbReference type="InterPro" id="IPR000194">
    <property type="entry name" value="ATPase_F1/V1/A1_a/bsu_nucl-bd"/>
</dbReference>
<dbReference type="InterPro" id="IPR024034">
    <property type="entry name" value="ATPase_F1/V1_b/a_C"/>
</dbReference>
<dbReference type="InterPro" id="IPR027417">
    <property type="entry name" value="P-loop_NTPase"/>
</dbReference>
<dbReference type="NCBIfam" id="TIGR01039">
    <property type="entry name" value="atpD"/>
    <property type="match status" value="1"/>
</dbReference>
<dbReference type="PANTHER" id="PTHR15184">
    <property type="entry name" value="ATP SYNTHASE"/>
    <property type="match status" value="1"/>
</dbReference>
<dbReference type="PANTHER" id="PTHR15184:SF71">
    <property type="entry name" value="ATP SYNTHASE SUBUNIT BETA, MITOCHONDRIAL"/>
    <property type="match status" value="1"/>
</dbReference>
<dbReference type="Pfam" id="PF00006">
    <property type="entry name" value="ATP-synt_ab"/>
    <property type="match status" value="1"/>
</dbReference>
<dbReference type="Pfam" id="PF02874">
    <property type="entry name" value="ATP-synt_ab_N"/>
    <property type="match status" value="1"/>
</dbReference>
<dbReference type="Pfam" id="PF22919">
    <property type="entry name" value="ATP-synt_VA_C"/>
    <property type="match status" value="1"/>
</dbReference>
<dbReference type="SMART" id="SM00382">
    <property type="entry name" value="AAA"/>
    <property type="match status" value="1"/>
</dbReference>
<dbReference type="SUPFAM" id="SSF47917">
    <property type="entry name" value="C-terminal domain of alpha and beta subunits of F1 ATP synthase"/>
    <property type="match status" value="1"/>
</dbReference>
<dbReference type="SUPFAM" id="SSF50615">
    <property type="entry name" value="N-terminal domain of alpha and beta subunits of F1 ATP synthase"/>
    <property type="match status" value="1"/>
</dbReference>
<dbReference type="SUPFAM" id="SSF52540">
    <property type="entry name" value="P-loop containing nucleoside triphosphate hydrolases"/>
    <property type="match status" value="1"/>
</dbReference>
<dbReference type="PROSITE" id="PS00152">
    <property type="entry name" value="ATPASE_ALPHA_BETA"/>
    <property type="match status" value="1"/>
</dbReference>